<name>RL33_ELUMP</name>
<dbReference type="EMBL" id="CP001055">
    <property type="protein sequence ID" value="ACC99042.1"/>
    <property type="molecule type" value="Genomic_DNA"/>
</dbReference>
<dbReference type="RefSeq" id="WP_012415657.1">
    <property type="nucleotide sequence ID" value="NC_010644.1"/>
</dbReference>
<dbReference type="SMR" id="B2KEU6"/>
<dbReference type="STRING" id="445932.Emin_1494"/>
<dbReference type="KEGG" id="emi:Emin_1494"/>
<dbReference type="HOGENOM" id="CLU_190949_0_1_0"/>
<dbReference type="Proteomes" id="UP000001029">
    <property type="component" value="Chromosome"/>
</dbReference>
<dbReference type="GO" id="GO:0005737">
    <property type="term" value="C:cytoplasm"/>
    <property type="evidence" value="ECO:0007669"/>
    <property type="project" value="UniProtKB-ARBA"/>
</dbReference>
<dbReference type="GO" id="GO:1990904">
    <property type="term" value="C:ribonucleoprotein complex"/>
    <property type="evidence" value="ECO:0007669"/>
    <property type="project" value="UniProtKB-KW"/>
</dbReference>
<dbReference type="GO" id="GO:0005840">
    <property type="term" value="C:ribosome"/>
    <property type="evidence" value="ECO:0007669"/>
    <property type="project" value="UniProtKB-KW"/>
</dbReference>
<dbReference type="GO" id="GO:0003735">
    <property type="term" value="F:structural constituent of ribosome"/>
    <property type="evidence" value="ECO:0007669"/>
    <property type="project" value="InterPro"/>
</dbReference>
<dbReference type="GO" id="GO:0006412">
    <property type="term" value="P:translation"/>
    <property type="evidence" value="ECO:0007669"/>
    <property type="project" value="UniProtKB-UniRule"/>
</dbReference>
<dbReference type="Gene3D" id="2.20.28.120">
    <property type="entry name" value="Ribosomal protein L33"/>
    <property type="match status" value="1"/>
</dbReference>
<dbReference type="HAMAP" id="MF_00294">
    <property type="entry name" value="Ribosomal_bL33"/>
    <property type="match status" value="1"/>
</dbReference>
<dbReference type="InterPro" id="IPR001705">
    <property type="entry name" value="Ribosomal_bL33"/>
</dbReference>
<dbReference type="InterPro" id="IPR038584">
    <property type="entry name" value="Ribosomal_bL33_sf"/>
</dbReference>
<dbReference type="InterPro" id="IPR011332">
    <property type="entry name" value="Ribosomal_zn-bd"/>
</dbReference>
<dbReference type="NCBIfam" id="NF001764">
    <property type="entry name" value="PRK00504.1"/>
    <property type="match status" value="1"/>
</dbReference>
<dbReference type="NCBIfam" id="TIGR01023">
    <property type="entry name" value="rpmG_bact"/>
    <property type="match status" value="1"/>
</dbReference>
<dbReference type="Pfam" id="PF00471">
    <property type="entry name" value="Ribosomal_L33"/>
    <property type="match status" value="1"/>
</dbReference>
<dbReference type="SUPFAM" id="SSF57829">
    <property type="entry name" value="Zn-binding ribosomal proteins"/>
    <property type="match status" value="1"/>
</dbReference>
<feature type="chain" id="PRO_0000356456" description="Large ribosomal subunit protein bL33">
    <location>
        <begin position="1"/>
        <end position="54"/>
    </location>
</feature>
<accession>B2KEU6</accession>
<reference key="1">
    <citation type="journal article" date="2009" name="Appl. Environ. Microbiol.">
        <title>Genomic analysis of 'Elusimicrobium minutum,' the first cultivated representative of the phylum 'Elusimicrobia' (formerly termite group 1).</title>
        <authorList>
            <person name="Herlemann D.P.R."/>
            <person name="Geissinger O."/>
            <person name="Ikeda-Ohtsubo W."/>
            <person name="Kunin V."/>
            <person name="Sun H."/>
            <person name="Lapidus A."/>
            <person name="Hugenholtz P."/>
            <person name="Brune A."/>
        </authorList>
    </citation>
    <scope>NUCLEOTIDE SEQUENCE [LARGE SCALE GENOMIC DNA]</scope>
    <source>
        <strain>Pei191</strain>
    </source>
</reference>
<evidence type="ECO:0000255" key="1">
    <source>
        <dbReference type="HAMAP-Rule" id="MF_00294"/>
    </source>
</evidence>
<evidence type="ECO:0000305" key="2"/>
<comment type="similarity">
    <text evidence="1">Belongs to the bacterial ribosomal protein bL33 family.</text>
</comment>
<keyword id="KW-1185">Reference proteome</keyword>
<keyword id="KW-0687">Ribonucleoprotein</keyword>
<keyword id="KW-0689">Ribosomal protein</keyword>
<sequence length="54" mass="6261">MASKERQTILLACTECKNKNYYYARGKKKEFKLELNKFCKACGKSTKHKEGKAN</sequence>
<gene>
    <name evidence="1" type="primary">rpmG</name>
    <name type="ordered locus">Emin_1494</name>
</gene>
<protein>
    <recommendedName>
        <fullName evidence="1">Large ribosomal subunit protein bL33</fullName>
    </recommendedName>
    <alternativeName>
        <fullName evidence="2">50S ribosomal protein L33</fullName>
    </alternativeName>
</protein>
<organism>
    <name type="scientific">Elusimicrobium minutum (strain Pei191)</name>
    <dbReference type="NCBI Taxonomy" id="445932"/>
    <lineage>
        <taxon>Bacteria</taxon>
        <taxon>Pseudomonadati</taxon>
        <taxon>Elusimicrobiota</taxon>
        <taxon>Elusimicrobia</taxon>
        <taxon>Elusimicrobiales</taxon>
        <taxon>Elusimicrobiaceae</taxon>
        <taxon>Elusimicrobium</taxon>
    </lineage>
</organism>
<proteinExistence type="inferred from homology"/>